<keyword id="KW-0067">ATP-binding</keyword>
<keyword id="KW-0963">Cytoplasm</keyword>
<keyword id="KW-0227">DNA damage</keyword>
<keyword id="KW-0233">DNA recombination</keyword>
<keyword id="KW-0234">DNA repair</keyword>
<keyword id="KW-0238">DNA-binding</keyword>
<keyword id="KW-0378">Hydrolase</keyword>
<keyword id="KW-0547">Nucleotide-binding</keyword>
<keyword id="KW-1185">Reference proteome</keyword>
<protein>
    <recommendedName>
        <fullName evidence="1">Holliday junction branch migration complex subunit RuvB</fullName>
        <ecNumber evidence="1">3.6.4.-</ecNumber>
    </recommendedName>
</protein>
<accession>P57892</accession>
<feature type="chain" id="PRO_0000165570" description="Holliday junction branch migration complex subunit RuvB">
    <location>
        <begin position="1"/>
        <end position="335"/>
    </location>
</feature>
<feature type="region of interest" description="Large ATPase domain (RuvB-L)" evidence="1">
    <location>
        <begin position="4"/>
        <end position="184"/>
    </location>
</feature>
<feature type="region of interest" description="Small ATPAse domain (RuvB-S)" evidence="1">
    <location>
        <begin position="185"/>
        <end position="255"/>
    </location>
</feature>
<feature type="region of interest" description="Head domain (RuvB-H)" evidence="1">
    <location>
        <begin position="258"/>
        <end position="335"/>
    </location>
</feature>
<feature type="binding site" evidence="1">
    <location>
        <position position="23"/>
    </location>
    <ligand>
        <name>ATP</name>
        <dbReference type="ChEBI" id="CHEBI:30616"/>
    </ligand>
</feature>
<feature type="binding site" evidence="1">
    <location>
        <position position="24"/>
    </location>
    <ligand>
        <name>ATP</name>
        <dbReference type="ChEBI" id="CHEBI:30616"/>
    </ligand>
</feature>
<feature type="binding site" evidence="1">
    <location>
        <position position="65"/>
    </location>
    <ligand>
        <name>ATP</name>
        <dbReference type="ChEBI" id="CHEBI:30616"/>
    </ligand>
</feature>
<feature type="binding site" evidence="1">
    <location>
        <position position="68"/>
    </location>
    <ligand>
        <name>ATP</name>
        <dbReference type="ChEBI" id="CHEBI:30616"/>
    </ligand>
</feature>
<feature type="binding site" evidence="1">
    <location>
        <position position="69"/>
    </location>
    <ligand>
        <name>ATP</name>
        <dbReference type="ChEBI" id="CHEBI:30616"/>
    </ligand>
</feature>
<feature type="binding site" evidence="1">
    <location>
        <position position="69"/>
    </location>
    <ligand>
        <name>Mg(2+)</name>
        <dbReference type="ChEBI" id="CHEBI:18420"/>
    </ligand>
</feature>
<feature type="binding site" evidence="1">
    <location>
        <position position="70"/>
    </location>
    <ligand>
        <name>ATP</name>
        <dbReference type="ChEBI" id="CHEBI:30616"/>
    </ligand>
</feature>
<feature type="binding site" evidence="1">
    <location>
        <begin position="131"/>
        <end position="133"/>
    </location>
    <ligand>
        <name>ATP</name>
        <dbReference type="ChEBI" id="CHEBI:30616"/>
    </ligand>
</feature>
<feature type="binding site" evidence="1">
    <location>
        <position position="174"/>
    </location>
    <ligand>
        <name>ATP</name>
        <dbReference type="ChEBI" id="CHEBI:30616"/>
    </ligand>
</feature>
<feature type="binding site" evidence="1">
    <location>
        <position position="184"/>
    </location>
    <ligand>
        <name>ATP</name>
        <dbReference type="ChEBI" id="CHEBI:30616"/>
    </ligand>
</feature>
<feature type="binding site" evidence="1">
    <location>
        <position position="221"/>
    </location>
    <ligand>
        <name>ATP</name>
        <dbReference type="ChEBI" id="CHEBI:30616"/>
    </ligand>
</feature>
<feature type="binding site" evidence="1">
    <location>
        <position position="294"/>
    </location>
    <ligand>
        <name>DNA</name>
        <dbReference type="ChEBI" id="CHEBI:16991"/>
    </ligand>
</feature>
<feature type="binding site" evidence="1">
    <location>
        <position position="313"/>
    </location>
    <ligand>
        <name>DNA</name>
        <dbReference type="ChEBI" id="CHEBI:16991"/>
    </ligand>
</feature>
<feature type="binding site" evidence="1">
    <location>
        <position position="318"/>
    </location>
    <ligand>
        <name>DNA</name>
        <dbReference type="ChEBI" id="CHEBI:16991"/>
    </ligand>
</feature>
<comment type="function">
    <text evidence="1">The RuvA-RuvB-RuvC complex processes Holliday junction (HJ) DNA during genetic recombination and DNA repair, while the RuvA-RuvB complex plays an important role in the rescue of blocked DNA replication forks via replication fork reversal (RFR). RuvA specifically binds to HJ cruciform DNA, conferring on it an open structure. The RuvB hexamer acts as an ATP-dependent pump, pulling dsDNA into and through the RuvAB complex. RuvB forms 2 homohexamers on either side of HJ DNA bound by 1 or 2 RuvA tetramers; 4 subunits per hexamer contact DNA at a time. Coordinated motions by a converter formed by DNA-disengaged RuvB subunits stimulates ATP hydrolysis and nucleotide exchange. Immobilization of the converter enables RuvB to convert the ATP-contained energy into a lever motion, pulling 2 nucleotides of DNA out of the RuvA tetramer per ATP hydrolyzed, thus driving DNA branch migration. The RuvB motors rotate together with the DNA substrate, which together with the progressing nucleotide cycle form the mechanistic basis for DNA recombination by continuous HJ branch migration. Branch migration allows RuvC to scan DNA until it finds its consensus sequence, where it cleaves and resolves cruciform DNA.</text>
</comment>
<comment type="catalytic activity">
    <reaction evidence="1">
        <text>ATP + H2O = ADP + phosphate + H(+)</text>
        <dbReference type="Rhea" id="RHEA:13065"/>
        <dbReference type="ChEBI" id="CHEBI:15377"/>
        <dbReference type="ChEBI" id="CHEBI:15378"/>
        <dbReference type="ChEBI" id="CHEBI:30616"/>
        <dbReference type="ChEBI" id="CHEBI:43474"/>
        <dbReference type="ChEBI" id="CHEBI:456216"/>
    </reaction>
</comment>
<comment type="subunit">
    <text evidence="1">Homohexamer. Forms an RuvA(8)-RuvB(12)-Holliday junction (HJ) complex. HJ DNA is sandwiched between 2 RuvA tetramers; dsDNA enters through RuvA and exits via RuvB. An RuvB hexamer assembles on each DNA strand where it exits the tetramer. Each RuvB hexamer is contacted by two RuvA subunits (via domain III) on 2 adjacent RuvB subunits; this complex drives branch migration. In the full resolvosome a probable DNA-RuvA(4)-RuvB(12)-RuvC(2) complex forms which resolves the HJ.</text>
</comment>
<comment type="subcellular location">
    <subcellularLocation>
        <location evidence="1">Cytoplasm</location>
    </subcellularLocation>
</comment>
<comment type="domain">
    <text evidence="1">Has 3 domains, the large (RuvB-L) and small ATPase (RuvB-S) domains and the C-terminal head (RuvB-H) domain. The head domain binds DNA, while the ATPase domains jointly bind ATP, ADP or are empty depending on the state of the subunit in the translocation cycle. During a single DNA translocation step the structure of each domain remains the same, but their relative positions change.</text>
</comment>
<comment type="similarity">
    <text evidence="1">Belongs to the RuvB family.</text>
</comment>
<evidence type="ECO:0000255" key="1">
    <source>
        <dbReference type="HAMAP-Rule" id="MF_00016"/>
    </source>
</evidence>
<organism>
    <name type="scientific">Pasteurella multocida (strain Pm70)</name>
    <dbReference type="NCBI Taxonomy" id="272843"/>
    <lineage>
        <taxon>Bacteria</taxon>
        <taxon>Pseudomonadati</taxon>
        <taxon>Pseudomonadota</taxon>
        <taxon>Gammaproteobacteria</taxon>
        <taxon>Pasteurellales</taxon>
        <taxon>Pasteurellaceae</taxon>
        <taxon>Pasteurella</taxon>
    </lineage>
</organism>
<sequence length="335" mass="37180">MIEADRIISTSAKGDEEYIDRAIRPKLLNDYVGQPHVCEQMAIFIQAAKLRQDALDHLLIFGPPGLGKTTLANIVAHEMGVNIRTTSGPVLEKAGDLAAMLTNLEPHDVLFIDEIHRLSPAIEEVLYPAMEDYQLDIMIGEGPAARSIKLDLPPFTLIGATTRAGSLTSPLRDRFGIVQRLEFYAVEDLTSIVARSANCLNLSISDTACYEIARRSRGTPRIANRLLRRVRDFADVRHAGIISEESAKAALLMLDVDDAGFDYLDRKLLNAVIERFDGGPVGLDNLAAAIGEERETIEDVLEPYLIQQGFLQRTPRGRMATSRTYRYFGLEKLTE</sequence>
<name>RUVB_PASMU</name>
<dbReference type="EC" id="3.6.4.-" evidence="1"/>
<dbReference type="EMBL" id="AE004439">
    <property type="protein sequence ID" value="AAK03060.1"/>
    <property type="molecule type" value="Genomic_DNA"/>
</dbReference>
<dbReference type="RefSeq" id="WP_005717162.1">
    <property type="nucleotide sequence ID" value="NC_002663.1"/>
</dbReference>
<dbReference type="SMR" id="P57892"/>
<dbReference type="STRING" id="272843.PM0976"/>
<dbReference type="EnsemblBacteria" id="AAK03060">
    <property type="protein sequence ID" value="AAK03060"/>
    <property type="gene ID" value="PM0976"/>
</dbReference>
<dbReference type="KEGG" id="pmu:PM0976"/>
<dbReference type="PATRIC" id="fig|272843.6.peg.988"/>
<dbReference type="HOGENOM" id="CLU_055599_1_0_6"/>
<dbReference type="OrthoDB" id="9804478at2"/>
<dbReference type="Proteomes" id="UP000000809">
    <property type="component" value="Chromosome"/>
</dbReference>
<dbReference type="GO" id="GO:0005737">
    <property type="term" value="C:cytoplasm"/>
    <property type="evidence" value="ECO:0007669"/>
    <property type="project" value="UniProtKB-SubCell"/>
</dbReference>
<dbReference type="GO" id="GO:0048476">
    <property type="term" value="C:Holliday junction resolvase complex"/>
    <property type="evidence" value="ECO:0007669"/>
    <property type="project" value="UniProtKB-UniRule"/>
</dbReference>
<dbReference type="GO" id="GO:0005524">
    <property type="term" value="F:ATP binding"/>
    <property type="evidence" value="ECO:0007669"/>
    <property type="project" value="UniProtKB-UniRule"/>
</dbReference>
<dbReference type="GO" id="GO:0016887">
    <property type="term" value="F:ATP hydrolysis activity"/>
    <property type="evidence" value="ECO:0007669"/>
    <property type="project" value="InterPro"/>
</dbReference>
<dbReference type="GO" id="GO:0000400">
    <property type="term" value="F:four-way junction DNA binding"/>
    <property type="evidence" value="ECO:0007669"/>
    <property type="project" value="UniProtKB-UniRule"/>
</dbReference>
<dbReference type="GO" id="GO:0009378">
    <property type="term" value="F:four-way junction helicase activity"/>
    <property type="evidence" value="ECO:0007669"/>
    <property type="project" value="InterPro"/>
</dbReference>
<dbReference type="GO" id="GO:0006310">
    <property type="term" value="P:DNA recombination"/>
    <property type="evidence" value="ECO:0007669"/>
    <property type="project" value="UniProtKB-UniRule"/>
</dbReference>
<dbReference type="GO" id="GO:0006281">
    <property type="term" value="P:DNA repair"/>
    <property type="evidence" value="ECO:0007669"/>
    <property type="project" value="UniProtKB-UniRule"/>
</dbReference>
<dbReference type="CDD" id="cd00009">
    <property type="entry name" value="AAA"/>
    <property type="match status" value="1"/>
</dbReference>
<dbReference type="FunFam" id="1.10.10.10:FF:000086">
    <property type="entry name" value="Holliday junction ATP-dependent DNA helicase RuvB"/>
    <property type="match status" value="1"/>
</dbReference>
<dbReference type="FunFam" id="3.40.50.300:FF:000073">
    <property type="entry name" value="Holliday junction ATP-dependent DNA helicase RuvB"/>
    <property type="match status" value="1"/>
</dbReference>
<dbReference type="Gene3D" id="1.10.8.60">
    <property type="match status" value="1"/>
</dbReference>
<dbReference type="Gene3D" id="3.40.50.300">
    <property type="entry name" value="P-loop containing nucleotide triphosphate hydrolases"/>
    <property type="match status" value="1"/>
</dbReference>
<dbReference type="Gene3D" id="1.10.10.10">
    <property type="entry name" value="Winged helix-like DNA-binding domain superfamily/Winged helix DNA-binding domain"/>
    <property type="match status" value="1"/>
</dbReference>
<dbReference type="HAMAP" id="MF_00016">
    <property type="entry name" value="DNA_HJ_migration_RuvB"/>
    <property type="match status" value="1"/>
</dbReference>
<dbReference type="InterPro" id="IPR003593">
    <property type="entry name" value="AAA+_ATPase"/>
</dbReference>
<dbReference type="InterPro" id="IPR041445">
    <property type="entry name" value="AAA_lid_4"/>
</dbReference>
<dbReference type="InterPro" id="IPR004605">
    <property type="entry name" value="DNA_helicase_Holl-junc_RuvB"/>
</dbReference>
<dbReference type="InterPro" id="IPR027417">
    <property type="entry name" value="P-loop_NTPase"/>
</dbReference>
<dbReference type="InterPro" id="IPR008824">
    <property type="entry name" value="RuvB-like_N"/>
</dbReference>
<dbReference type="InterPro" id="IPR008823">
    <property type="entry name" value="RuvB_C"/>
</dbReference>
<dbReference type="InterPro" id="IPR036388">
    <property type="entry name" value="WH-like_DNA-bd_sf"/>
</dbReference>
<dbReference type="InterPro" id="IPR036390">
    <property type="entry name" value="WH_DNA-bd_sf"/>
</dbReference>
<dbReference type="NCBIfam" id="NF000868">
    <property type="entry name" value="PRK00080.1"/>
    <property type="match status" value="1"/>
</dbReference>
<dbReference type="NCBIfam" id="TIGR00635">
    <property type="entry name" value="ruvB"/>
    <property type="match status" value="1"/>
</dbReference>
<dbReference type="PANTHER" id="PTHR42848">
    <property type="match status" value="1"/>
</dbReference>
<dbReference type="PANTHER" id="PTHR42848:SF1">
    <property type="entry name" value="HOLLIDAY JUNCTION BRANCH MIGRATION COMPLEX SUBUNIT RUVB"/>
    <property type="match status" value="1"/>
</dbReference>
<dbReference type="Pfam" id="PF17864">
    <property type="entry name" value="AAA_lid_4"/>
    <property type="match status" value="1"/>
</dbReference>
<dbReference type="Pfam" id="PF05491">
    <property type="entry name" value="RuvB_C"/>
    <property type="match status" value="1"/>
</dbReference>
<dbReference type="Pfam" id="PF05496">
    <property type="entry name" value="RuvB_N"/>
    <property type="match status" value="1"/>
</dbReference>
<dbReference type="SMART" id="SM00382">
    <property type="entry name" value="AAA"/>
    <property type="match status" value="1"/>
</dbReference>
<dbReference type="SUPFAM" id="SSF52540">
    <property type="entry name" value="P-loop containing nucleoside triphosphate hydrolases"/>
    <property type="match status" value="1"/>
</dbReference>
<dbReference type="SUPFAM" id="SSF46785">
    <property type="entry name" value="Winged helix' DNA-binding domain"/>
    <property type="match status" value="1"/>
</dbReference>
<reference key="1">
    <citation type="journal article" date="2001" name="Proc. Natl. Acad. Sci. U.S.A.">
        <title>Complete genomic sequence of Pasteurella multocida Pm70.</title>
        <authorList>
            <person name="May B.J."/>
            <person name="Zhang Q."/>
            <person name="Li L.L."/>
            <person name="Paustian M.L."/>
            <person name="Whittam T.S."/>
            <person name="Kapur V."/>
        </authorList>
    </citation>
    <scope>NUCLEOTIDE SEQUENCE [LARGE SCALE GENOMIC DNA]</scope>
    <source>
        <strain>Pm70</strain>
    </source>
</reference>
<gene>
    <name evidence="1" type="primary">ruvB</name>
    <name type="ordered locus">PM0976</name>
</gene>
<proteinExistence type="inferred from homology"/>